<keyword id="KW-0408">Iron</keyword>
<keyword id="KW-0472">Membrane</keyword>
<keyword id="KW-0479">Metal-binding</keyword>
<keyword id="KW-0496">Mitochondrion</keyword>
<keyword id="KW-0999">Mitochondrion inner membrane</keyword>
<keyword id="KW-0503">Monooxygenase</keyword>
<keyword id="KW-0520">NAD</keyword>
<keyword id="KW-0560">Oxidoreductase</keyword>
<keyword id="KW-1185">Reference proteome</keyword>
<keyword id="KW-0677">Repeat</keyword>
<keyword id="KW-0809">Transit peptide</keyword>
<keyword id="KW-0831">Ubiquinone biosynthesis</keyword>
<sequence length="217" mass="24361">MSCARALAACCLWRLRTGALQPLSAYGRRISVRFCSSGMTLDNINREAVDRIIRVDHAGEYGANRIYAGQMAVLGRTSIGPVIQKMWDQEKDHLKKFNELMVAFRVRPTVLMPFWNVVGFALGAGTALLGKEGAMACTVAVEESIAHHYNNQIRTLMEKEPEKYEELLQVIKKFRDEELEHHDIGLEHDAELAPAYVVLKSVIQAGCKVAIYLSERL</sequence>
<proteinExistence type="evidence at transcript level"/>
<evidence type="ECO:0000250" key="1">
    <source>
        <dbReference type="UniProtKB" id="Q99807"/>
    </source>
</evidence>
<evidence type="ECO:0000255" key="2">
    <source>
        <dbReference type="HAMAP-Rule" id="MF_03194"/>
    </source>
</evidence>
<dbReference type="EC" id="1.14.13.253" evidence="2"/>
<dbReference type="EMBL" id="BC109578">
    <property type="protein sequence ID" value="AAI09579.1"/>
    <property type="molecule type" value="mRNA"/>
</dbReference>
<dbReference type="RefSeq" id="NP_001106712.1">
    <property type="nucleotide sequence ID" value="NM_001113241.1"/>
</dbReference>
<dbReference type="SMR" id="Q2TBW2"/>
<dbReference type="FunCoup" id="Q2TBW2">
    <property type="interactions" value="1159"/>
</dbReference>
<dbReference type="STRING" id="9913.ENSBTAP00000028299"/>
<dbReference type="PaxDb" id="9913-ENSBTAP00000043418"/>
<dbReference type="Ensembl" id="ENSBTAT00000028299.4">
    <property type="protein sequence ID" value="ENSBTAP00000028299.3"/>
    <property type="gene ID" value="ENSBTAG00000021242.6"/>
</dbReference>
<dbReference type="GeneID" id="504771"/>
<dbReference type="KEGG" id="bta:504771"/>
<dbReference type="CTD" id="10229"/>
<dbReference type="VGNC" id="VGNC:27615">
    <property type="gene designation" value="COQ7"/>
</dbReference>
<dbReference type="eggNOG" id="KOG4061">
    <property type="taxonomic scope" value="Eukaryota"/>
</dbReference>
<dbReference type="InParanoid" id="Q2TBW2"/>
<dbReference type="OrthoDB" id="275371at2759"/>
<dbReference type="TreeFam" id="TF314559"/>
<dbReference type="UniPathway" id="UPA00232"/>
<dbReference type="Proteomes" id="UP000009136">
    <property type="component" value="Chromosome 25"/>
</dbReference>
<dbReference type="GO" id="GO:0031314">
    <property type="term" value="C:extrinsic component of mitochondrial inner membrane"/>
    <property type="evidence" value="ECO:0007669"/>
    <property type="project" value="UniProtKB-UniRule"/>
</dbReference>
<dbReference type="GO" id="GO:0005743">
    <property type="term" value="C:mitochondrial inner membrane"/>
    <property type="evidence" value="ECO:0000318"/>
    <property type="project" value="GO_Central"/>
</dbReference>
<dbReference type="GO" id="GO:0005634">
    <property type="term" value="C:nucleus"/>
    <property type="evidence" value="ECO:0000318"/>
    <property type="project" value="GO_Central"/>
</dbReference>
<dbReference type="GO" id="GO:0110142">
    <property type="term" value="C:ubiquinone biosynthesis complex"/>
    <property type="evidence" value="ECO:0007669"/>
    <property type="project" value="Ensembl"/>
</dbReference>
<dbReference type="GO" id="GO:0008682">
    <property type="term" value="F:3-demethoxyubiquinol 3-hydroxylase activity"/>
    <property type="evidence" value="ECO:0000318"/>
    <property type="project" value="GO_Central"/>
</dbReference>
<dbReference type="GO" id="GO:0160224">
    <property type="term" value="F:3-demethoxyubiquinone 3-hydroxylase (NADH) activity"/>
    <property type="evidence" value="ECO:0000250"/>
    <property type="project" value="UniProtKB"/>
</dbReference>
<dbReference type="GO" id="GO:0046872">
    <property type="term" value="F:metal ion binding"/>
    <property type="evidence" value="ECO:0007669"/>
    <property type="project" value="UniProtKB-KW"/>
</dbReference>
<dbReference type="GO" id="GO:0008340">
    <property type="term" value="P:determination of adult lifespan"/>
    <property type="evidence" value="ECO:0000318"/>
    <property type="project" value="GO_Central"/>
</dbReference>
<dbReference type="GO" id="GO:0010468">
    <property type="term" value="P:regulation of gene expression"/>
    <property type="evidence" value="ECO:0000318"/>
    <property type="project" value="GO_Central"/>
</dbReference>
<dbReference type="GO" id="GO:2000377">
    <property type="term" value="P:regulation of reactive oxygen species metabolic process"/>
    <property type="evidence" value="ECO:0000318"/>
    <property type="project" value="GO_Central"/>
</dbReference>
<dbReference type="GO" id="GO:0006744">
    <property type="term" value="P:ubiquinone biosynthetic process"/>
    <property type="evidence" value="ECO:0000250"/>
    <property type="project" value="UniProtKB"/>
</dbReference>
<dbReference type="CDD" id="cd01042">
    <property type="entry name" value="DMQH"/>
    <property type="match status" value="1"/>
</dbReference>
<dbReference type="HAMAP" id="MF_01658">
    <property type="entry name" value="COQ7"/>
    <property type="match status" value="1"/>
</dbReference>
<dbReference type="InterPro" id="IPR009078">
    <property type="entry name" value="Ferritin-like_SF"/>
</dbReference>
<dbReference type="InterPro" id="IPR011566">
    <property type="entry name" value="Ubq_synth_Coq7"/>
</dbReference>
<dbReference type="PANTHER" id="PTHR11237:SF4">
    <property type="entry name" value="5-DEMETHOXYUBIQUINONE HYDROXYLASE, MITOCHONDRIAL"/>
    <property type="match status" value="1"/>
</dbReference>
<dbReference type="PANTHER" id="PTHR11237">
    <property type="entry name" value="COENZYME Q10 BIOSYNTHESIS PROTEIN 7"/>
    <property type="match status" value="1"/>
</dbReference>
<dbReference type="Pfam" id="PF03232">
    <property type="entry name" value="COQ7"/>
    <property type="match status" value="1"/>
</dbReference>
<dbReference type="SUPFAM" id="SSF47240">
    <property type="entry name" value="Ferritin-like"/>
    <property type="match status" value="1"/>
</dbReference>
<accession>Q2TBW2</accession>
<feature type="transit peptide" description="Mitochondrion" evidence="2">
    <location>
        <begin position="1"/>
        <end position="34"/>
    </location>
</feature>
<feature type="chain" id="PRO_0000252363" description="NADPH-dependent 3-demethoxyubiquinone 3-hydroxylase, mitochondrial">
    <location>
        <begin position="35"/>
        <end position="217"/>
    </location>
</feature>
<feature type="repeat" description="1">
    <location>
        <begin position="48"/>
        <end position="129"/>
    </location>
</feature>
<feature type="repeat" description="2">
    <location>
        <begin position="130"/>
        <end position="217"/>
    </location>
</feature>
<feature type="region of interest" description="2 X approximate tandem repeats">
    <location>
        <begin position="48"/>
        <end position="217"/>
    </location>
</feature>
<feature type="binding site" evidence="1">
    <location>
        <position position="51"/>
    </location>
    <ligand>
        <name>NADH</name>
        <dbReference type="ChEBI" id="CHEBI:57945"/>
    </ligand>
</feature>
<feature type="binding site" evidence="2">
    <location>
        <position position="60"/>
    </location>
    <ligand>
        <name>Fe cation</name>
        <dbReference type="ChEBI" id="CHEBI:24875"/>
        <label>1</label>
    </ligand>
</feature>
<feature type="binding site" evidence="2">
    <location>
        <position position="90"/>
    </location>
    <ligand>
        <name>Fe cation</name>
        <dbReference type="ChEBI" id="CHEBI:24875"/>
        <label>1</label>
    </ligand>
</feature>
<feature type="binding site" evidence="2">
    <location>
        <position position="90"/>
    </location>
    <ligand>
        <name>Fe cation</name>
        <dbReference type="ChEBI" id="CHEBI:24875"/>
        <label>2</label>
    </ligand>
</feature>
<feature type="binding site" evidence="2">
    <location>
        <position position="93"/>
    </location>
    <ligand>
        <name>Fe cation</name>
        <dbReference type="ChEBI" id="CHEBI:24875"/>
        <label>1</label>
    </ligand>
</feature>
<feature type="binding site" evidence="2">
    <location>
        <position position="142"/>
    </location>
    <ligand>
        <name>Fe cation</name>
        <dbReference type="ChEBI" id="CHEBI:24875"/>
        <label>2</label>
    </ligand>
</feature>
<feature type="binding site" evidence="2">
    <location>
        <position position="178"/>
    </location>
    <ligand>
        <name>Fe cation</name>
        <dbReference type="ChEBI" id="CHEBI:24875"/>
        <label>1</label>
    </ligand>
</feature>
<feature type="binding site" evidence="2">
    <location>
        <position position="178"/>
    </location>
    <ligand>
        <name>Fe cation</name>
        <dbReference type="ChEBI" id="CHEBI:24875"/>
        <label>2</label>
    </ligand>
</feature>
<feature type="binding site" evidence="2">
    <location>
        <position position="181"/>
    </location>
    <ligand>
        <name>Fe cation</name>
        <dbReference type="ChEBI" id="CHEBI:24875"/>
        <label>2</label>
    </ligand>
</feature>
<feature type="binding site" evidence="1">
    <location>
        <position position="208"/>
    </location>
    <ligand>
        <name>NADH</name>
        <dbReference type="ChEBI" id="CHEBI:57945"/>
    </ligand>
</feature>
<feature type="binding site" evidence="1">
    <location>
        <position position="212"/>
    </location>
    <ligand>
        <name>NADH</name>
        <dbReference type="ChEBI" id="CHEBI:57945"/>
    </ligand>
</feature>
<feature type="binding site" evidence="1">
    <location>
        <position position="216"/>
    </location>
    <ligand>
        <name>NADH</name>
        <dbReference type="ChEBI" id="CHEBI:57945"/>
    </ligand>
</feature>
<protein>
    <recommendedName>
        <fullName evidence="2">NADPH-dependent 3-demethoxyubiquinone 3-hydroxylase, mitochondrial</fullName>
        <ecNumber evidence="2">1.14.13.253</ecNumber>
    </recommendedName>
    <alternativeName>
        <fullName evidence="2">3-demethoxyubiquinone 3-hydroxylase (NADH)</fullName>
    </alternativeName>
    <alternativeName>
        <fullName evidence="2">Timing protein clk-1 homolog</fullName>
    </alternativeName>
    <alternativeName>
        <fullName evidence="2">Ubiquinone biosynthesis monooxygenase COQ7</fullName>
    </alternativeName>
</protein>
<name>COQ7_BOVIN</name>
<comment type="function">
    <text evidence="1 2">Catalyzes the hydroxylation of the 5-methoxy-2-methyl-3-(all-trans-polyprenyl)benzoquinone at the C6 position and participates in the biosynthesis of ubiquinone. Catalyzes the reaction through a substrate-mediated reduction pathway, whereby NADH shuttles electrons to 5-methoxy-2-methyl-3-(all-trans-decaprenyl)benzoquinone, which then transfers the electrons to the two Fe(3+) centers. The binding of 5-methoxy-2-methyl-3-(all-trans-polyprenyl)benzoquinone (DMQn) mediates reduction of the diiron center by nicotinamide adenine dinucleotide (NADH) and initiates oxygen activation for subsequent DMQ hydroxylation. The physiological substrates are 5-methoxy-2-methyl-3-(all-trans-nonaprenyl)benzoquinone (DMQ(9)) and 5-methoxy-2-methyl-3-(all-trans-decaprenyl)benzoquinone (DMQ(10)), however in vitro the enzyme does not have any specificity concerning the length of the polyprenyl tail, and accepts tails of various lengths with similar efficiency (By similarity). Also has a structural role in the COQ enzyme complex, stabilizing other COQ polypeptides. Involved in lifespan determination in a ubiquinone-independent manner (By similarity). Plays a role in modulating mitochondrial stress responses, acting in the nucleus, perhaps via regulating gene expression, independent of its characterized mitochondrial function in ubiquinone biosynthesis (By similarity).</text>
</comment>
<comment type="catalytic activity">
    <reaction evidence="2">
        <text>a 5-methoxy-2-methyl-3-(all-trans-polyprenyl)benzoquinone + NADH + O2 = a 3-demethylubiquinone + NAD(+) + H2O</text>
        <dbReference type="Rhea" id="RHEA:81211"/>
        <dbReference type="Rhea" id="RHEA-COMP:19654"/>
        <dbReference type="Rhea" id="RHEA-COMP:19655"/>
        <dbReference type="ChEBI" id="CHEBI:15377"/>
        <dbReference type="ChEBI" id="CHEBI:15379"/>
        <dbReference type="ChEBI" id="CHEBI:57540"/>
        <dbReference type="ChEBI" id="CHEBI:57945"/>
        <dbReference type="ChEBI" id="CHEBI:231825"/>
        <dbReference type="ChEBI" id="CHEBI:231829"/>
        <dbReference type="EC" id="1.14.13.253"/>
    </reaction>
    <physiologicalReaction direction="left-to-right" evidence="2">
        <dbReference type="Rhea" id="RHEA:81212"/>
    </physiologicalReaction>
</comment>
<comment type="cofactor">
    <cofactor evidence="2">
        <name>Fe cation</name>
        <dbReference type="ChEBI" id="CHEBI:24875"/>
    </cofactor>
    <text evidence="2">Binds 2 iron ions per subunit.</text>
</comment>
<comment type="pathway">
    <text evidence="2">Cofactor biosynthesis; ubiquinone biosynthesis.</text>
</comment>
<comment type="subunit">
    <text evidence="2">Component of a multi-subunit COQ enzyme complex (By similarity). Interacts with COQ8B and COQ6. Interacts with COQ9 (By similarity).</text>
</comment>
<comment type="subcellular location">
    <subcellularLocation>
        <location evidence="2">Mitochondrion inner membrane</location>
        <topology evidence="2">Peripheral membrane protein</topology>
        <orientation evidence="2">Matrix side</orientation>
    </subcellularLocation>
</comment>
<comment type="similarity">
    <text evidence="2">Belongs to the COQ7 family.</text>
</comment>
<reference key="1">
    <citation type="submission" date="2005-11" db="EMBL/GenBank/DDBJ databases">
        <authorList>
            <consortium name="NIH - Mammalian Gene Collection (MGC) project"/>
        </authorList>
    </citation>
    <scope>NUCLEOTIDE SEQUENCE [LARGE SCALE MRNA]</scope>
    <source>
        <strain>Crossbred X Angus</strain>
        <tissue>Liver</tissue>
    </source>
</reference>
<organism>
    <name type="scientific">Bos taurus</name>
    <name type="common">Bovine</name>
    <dbReference type="NCBI Taxonomy" id="9913"/>
    <lineage>
        <taxon>Eukaryota</taxon>
        <taxon>Metazoa</taxon>
        <taxon>Chordata</taxon>
        <taxon>Craniata</taxon>
        <taxon>Vertebrata</taxon>
        <taxon>Euteleostomi</taxon>
        <taxon>Mammalia</taxon>
        <taxon>Eutheria</taxon>
        <taxon>Laurasiatheria</taxon>
        <taxon>Artiodactyla</taxon>
        <taxon>Ruminantia</taxon>
        <taxon>Pecora</taxon>
        <taxon>Bovidae</taxon>
        <taxon>Bovinae</taxon>
        <taxon>Bos</taxon>
    </lineage>
</organism>
<gene>
    <name evidence="2" type="primary">COQ7</name>
</gene>